<protein>
    <recommendedName>
        <fullName>Polynucleotide 5'-hydroxyl-kinase NOL9</fullName>
        <ecNumber>2.7.1.-</ecNumber>
    </recommendedName>
    <alternativeName>
        <fullName>Nucleolar protein 9 homolog</fullName>
    </alternativeName>
</protein>
<accession>A1ZA92</accession>
<accession>Q8SZP4</accession>
<comment type="function">
    <text evidence="1">Polynucleotide 5'-kinase involved in rRNA processing.</text>
</comment>
<comment type="subcellular location">
    <subcellularLocation>
        <location evidence="1">Nucleus</location>
        <location evidence="1">Nucleolus</location>
    </subcellularLocation>
</comment>
<comment type="similarity">
    <text evidence="4">Belongs to the Clp1 family. NOL9/GRC3 subfamily.</text>
</comment>
<evidence type="ECO:0000250" key="1"/>
<evidence type="ECO:0000255" key="2"/>
<evidence type="ECO:0000256" key="3">
    <source>
        <dbReference type="SAM" id="MobiDB-lite"/>
    </source>
</evidence>
<evidence type="ECO:0000305" key="4"/>
<name>NOL9_DROME</name>
<gene>
    <name type="ORF">CG8414</name>
</gene>
<dbReference type="EC" id="2.7.1.-"/>
<dbReference type="EMBL" id="AE013599">
    <property type="protein sequence ID" value="AAF58067.2"/>
    <property type="molecule type" value="Genomic_DNA"/>
</dbReference>
<dbReference type="EMBL" id="AY070613">
    <property type="protein sequence ID" value="AAL48084.1"/>
    <property type="molecule type" value="mRNA"/>
</dbReference>
<dbReference type="RefSeq" id="NP_611084.2">
    <property type="nucleotide sequence ID" value="NM_137240.4"/>
</dbReference>
<dbReference type="BioGRID" id="62499">
    <property type="interactions" value="26"/>
</dbReference>
<dbReference type="FunCoup" id="A1ZA92">
    <property type="interactions" value="919"/>
</dbReference>
<dbReference type="IntAct" id="A1ZA92">
    <property type="interactions" value="11"/>
</dbReference>
<dbReference type="STRING" id="7227.FBpp0086393"/>
<dbReference type="PaxDb" id="7227-FBpp0086393"/>
<dbReference type="EnsemblMetazoa" id="FBtr0087255">
    <property type="protein sequence ID" value="FBpp0086393"/>
    <property type="gene ID" value="FBgn0034073"/>
</dbReference>
<dbReference type="GeneID" id="36774"/>
<dbReference type="KEGG" id="dme:Dmel_CG8414"/>
<dbReference type="UCSC" id="CG8414-RA">
    <property type="organism name" value="d. melanogaster"/>
</dbReference>
<dbReference type="AGR" id="FB:FBgn0034073"/>
<dbReference type="FlyBase" id="FBgn0034073">
    <property type="gene designation" value="CG8414"/>
</dbReference>
<dbReference type="VEuPathDB" id="VectorBase:FBgn0034073"/>
<dbReference type="eggNOG" id="KOG2750">
    <property type="taxonomic scope" value="Eukaryota"/>
</dbReference>
<dbReference type="GeneTree" id="ENSGT00940000153668"/>
<dbReference type="HOGENOM" id="CLU_012180_0_0_1"/>
<dbReference type="InParanoid" id="A1ZA92"/>
<dbReference type="OMA" id="DCQPLGV"/>
<dbReference type="OrthoDB" id="2405412at2759"/>
<dbReference type="PhylomeDB" id="A1ZA92"/>
<dbReference type="Reactome" id="R-DME-6791226">
    <property type="pathway name" value="Major pathway of rRNA processing in the nucleolus and cytosol"/>
</dbReference>
<dbReference type="BioGRID-ORCS" id="36774">
    <property type="hits" value="0 hits in 1 CRISPR screen"/>
</dbReference>
<dbReference type="GenomeRNAi" id="36774"/>
<dbReference type="PRO" id="PR:A1ZA92"/>
<dbReference type="Proteomes" id="UP000000803">
    <property type="component" value="Chromosome 2R"/>
</dbReference>
<dbReference type="Bgee" id="FBgn0034073">
    <property type="expression patterns" value="Expressed in enterocyte of anterior adult midgut epithelium in digestive tract and 138 other cell types or tissues"/>
</dbReference>
<dbReference type="ExpressionAtlas" id="A1ZA92">
    <property type="expression patterns" value="baseline and differential"/>
</dbReference>
<dbReference type="GO" id="GO:0005730">
    <property type="term" value="C:nucleolus"/>
    <property type="evidence" value="ECO:0007669"/>
    <property type="project" value="UniProtKB-SubCell"/>
</dbReference>
<dbReference type="GO" id="GO:0005634">
    <property type="term" value="C:nucleus"/>
    <property type="evidence" value="ECO:0000318"/>
    <property type="project" value="GO_Central"/>
</dbReference>
<dbReference type="GO" id="GO:0005524">
    <property type="term" value="F:ATP binding"/>
    <property type="evidence" value="ECO:0007669"/>
    <property type="project" value="UniProtKB-KW"/>
</dbReference>
<dbReference type="GO" id="GO:0046404">
    <property type="term" value="F:ATP-dependent polydeoxyribonucleotide 5'-hydroxyl-kinase activity"/>
    <property type="evidence" value="ECO:0000250"/>
    <property type="project" value="FlyBase"/>
</dbReference>
<dbReference type="GO" id="GO:0051731">
    <property type="term" value="F:polynucleotide 5'-hydroxyl-kinase activity"/>
    <property type="evidence" value="ECO:0000250"/>
    <property type="project" value="UniProtKB"/>
</dbReference>
<dbReference type="GO" id="GO:0000448">
    <property type="term" value="P:cleavage in ITS2 between 5.8S rRNA and LSU-rRNA of tricistronic rRNA transcript (SSU-rRNA, 5.8S rRNA, LSU-rRNA)"/>
    <property type="evidence" value="ECO:0000318"/>
    <property type="project" value="GO_Central"/>
</dbReference>
<dbReference type="GO" id="GO:0006364">
    <property type="term" value="P:rRNA processing"/>
    <property type="evidence" value="ECO:0000250"/>
    <property type="project" value="UniProtKB"/>
</dbReference>
<dbReference type="FunFam" id="3.40.50.300:FF:003584">
    <property type="entry name" value="GD25570"/>
    <property type="match status" value="1"/>
</dbReference>
<dbReference type="Gene3D" id="3.40.50.300">
    <property type="entry name" value="P-loop containing nucleotide triphosphate hydrolases"/>
    <property type="match status" value="1"/>
</dbReference>
<dbReference type="InterPro" id="IPR045116">
    <property type="entry name" value="Clp1/Grc3"/>
</dbReference>
<dbReference type="InterPro" id="IPR032319">
    <property type="entry name" value="CLP1_P"/>
</dbReference>
<dbReference type="InterPro" id="IPR027417">
    <property type="entry name" value="P-loop_NTPase"/>
</dbReference>
<dbReference type="PANTHER" id="PTHR12755">
    <property type="entry name" value="CLEAVAGE/POLYADENYLATION FACTOR IA SUBUNIT CLP1P"/>
    <property type="match status" value="1"/>
</dbReference>
<dbReference type="PANTHER" id="PTHR12755:SF3">
    <property type="entry name" value="POLYNUCLEOTIDE 5'-HYDROXYL-KINASE NOL9"/>
    <property type="match status" value="1"/>
</dbReference>
<dbReference type="Pfam" id="PF16575">
    <property type="entry name" value="CLP1_P"/>
    <property type="match status" value="1"/>
</dbReference>
<dbReference type="Pfam" id="PF24419">
    <property type="entry name" value="Cupin_NOL9"/>
    <property type="match status" value="1"/>
</dbReference>
<dbReference type="Pfam" id="PF25467">
    <property type="entry name" value="NOL9_C"/>
    <property type="match status" value="1"/>
</dbReference>
<dbReference type="SUPFAM" id="SSF52540">
    <property type="entry name" value="P-loop containing nucleoside triphosphate hydrolases"/>
    <property type="match status" value="1"/>
</dbReference>
<reference key="1">
    <citation type="journal article" date="2000" name="Science">
        <title>The genome sequence of Drosophila melanogaster.</title>
        <authorList>
            <person name="Adams M.D."/>
            <person name="Celniker S.E."/>
            <person name="Holt R.A."/>
            <person name="Evans C.A."/>
            <person name="Gocayne J.D."/>
            <person name="Amanatides P.G."/>
            <person name="Scherer S.E."/>
            <person name="Li P.W."/>
            <person name="Hoskins R.A."/>
            <person name="Galle R.F."/>
            <person name="George R.A."/>
            <person name="Lewis S.E."/>
            <person name="Richards S."/>
            <person name="Ashburner M."/>
            <person name="Henderson S.N."/>
            <person name="Sutton G.G."/>
            <person name="Wortman J.R."/>
            <person name="Yandell M.D."/>
            <person name="Zhang Q."/>
            <person name="Chen L.X."/>
            <person name="Brandon R.C."/>
            <person name="Rogers Y.-H.C."/>
            <person name="Blazej R.G."/>
            <person name="Champe M."/>
            <person name="Pfeiffer B.D."/>
            <person name="Wan K.H."/>
            <person name="Doyle C."/>
            <person name="Baxter E.G."/>
            <person name="Helt G."/>
            <person name="Nelson C.R."/>
            <person name="Miklos G.L.G."/>
            <person name="Abril J.F."/>
            <person name="Agbayani A."/>
            <person name="An H.-J."/>
            <person name="Andrews-Pfannkoch C."/>
            <person name="Baldwin D."/>
            <person name="Ballew R.M."/>
            <person name="Basu A."/>
            <person name="Baxendale J."/>
            <person name="Bayraktaroglu L."/>
            <person name="Beasley E.M."/>
            <person name="Beeson K.Y."/>
            <person name="Benos P.V."/>
            <person name="Berman B.P."/>
            <person name="Bhandari D."/>
            <person name="Bolshakov S."/>
            <person name="Borkova D."/>
            <person name="Botchan M.R."/>
            <person name="Bouck J."/>
            <person name="Brokstein P."/>
            <person name="Brottier P."/>
            <person name="Burtis K.C."/>
            <person name="Busam D.A."/>
            <person name="Butler H."/>
            <person name="Cadieu E."/>
            <person name="Center A."/>
            <person name="Chandra I."/>
            <person name="Cherry J.M."/>
            <person name="Cawley S."/>
            <person name="Dahlke C."/>
            <person name="Davenport L.B."/>
            <person name="Davies P."/>
            <person name="de Pablos B."/>
            <person name="Delcher A."/>
            <person name="Deng Z."/>
            <person name="Mays A.D."/>
            <person name="Dew I."/>
            <person name="Dietz S.M."/>
            <person name="Dodson K."/>
            <person name="Doup L.E."/>
            <person name="Downes M."/>
            <person name="Dugan-Rocha S."/>
            <person name="Dunkov B.C."/>
            <person name="Dunn P."/>
            <person name="Durbin K.J."/>
            <person name="Evangelista C.C."/>
            <person name="Ferraz C."/>
            <person name="Ferriera S."/>
            <person name="Fleischmann W."/>
            <person name="Fosler C."/>
            <person name="Gabrielian A.E."/>
            <person name="Garg N.S."/>
            <person name="Gelbart W.M."/>
            <person name="Glasser K."/>
            <person name="Glodek A."/>
            <person name="Gong F."/>
            <person name="Gorrell J.H."/>
            <person name="Gu Z."/>
            <person name="Guan P."/>
            <person name="Harris M."/>
            <person name="Harris N.L."/>
            <person name="Harvey D.A."/>
            <person name="Heiman T.J."/>
            <person name="Hernandez J.R."/>
            <person name="Houck J."/>
            <person name="Hostin D."/>
            <person name="Houston K.A."/>
            <person name="Howland T.J."/>
            <person name="Wei M.-H."/>
            <person name="Ibegwam C."/>
            <person name="Jalali M."/>
            <person name="Kalush F."/>
            <person name="Karpen G.H."/>
            <person name="Ke Z."/>
            <person name="Kennison J.A."/>
            <person name="Ketchum K.A."/>
            <person name="Kimmel B.E."/>
            <person name="Kodira C.D."/>
            <person name="Kraft C.L."/>
            <person name="Kravitz S."/>
            <person name="Kulp D."/>
            <person name="Lai Z."/>
            <person name="Lasko P."/>
            <person name="Lei Y."/>
            <person name="Levitsky A.A."/>
            <person name="Li J.H."/>
            <person name="Li Z."/>
            <person name="Liang Y."/>
            <person name="Lin X."/>
            <person name="Liu X."/>
            <person name="Mattei B."/>
            <person name="McIntosh T.C."/>
            <person name="McLeod M.P."/>
            <person name="McPherson D."/>
            <person name="Merkulov G."/>
            <person name="Milshina N.V."/>
            <person name="Mobarry C."/>
            <person name="Morris J."/>
            <person name="Moshrefi A."/>
            <person name="Mount S.M."/>
            <person name="Moy M."/>
            <person name="Murphy B."/>
            <person name="Murphy L."/>
            <person name="Muzny D.M."/>
            <person name="Nelson D.L."/>
            <person name="Nelson D.R."/>
            <person name="Nelson K.A."/>
            <person name="Nixon K."/>
            <person name="Nusskern D.R."/>
            <person name="Pacleb J.M."/>
            <person name="Palazzolo M."/>
            <person name="Pittman G.S."/>
            <person name="Pan S."/>
            <person name="Pollard J."/>
            <person name="Puri V."/>
            <person name="Reese M.G."/>
            <person name="Reinert K."/>
            <person name="Remington K."/>
            <person name="Saunders R.D.C."/>
            <person name="Scheeler F."/>
            <person name="Shen H."/>
            <person name="Shue B.C."/>
            <person name="Siden-Kiamos I."/>
            <person name="Simpson M."/>
            <person name="Skupski M.P."/>
            <person name="Smith T.J."/>
            <person name="Spier E."/>
            <person name="Spradling A.C."/>
            <person name="Stapleton M."/>
            <person name="Strong R."/>
            <person name="Sun E."/>
            <person name="Svirskas R."/>
            <person name="Tector C."/>
            <person name="Turner R."/>
            <person name="Venter E."/>
            <person name="Wang A.H."/>
            <person name="Wang X."/>
            <person name="Wang Z.-Y."/>
            <person name="Wassarman D.A."/>
            <person name="Weinstock G.M."/>
            <person name="Weissenbach J."/>
            <person name="Williams S.M."/>
            <person name="Woodage T."/>
            <person name="Worley K.C."/>
            <person name="Wu D."/>
            <person name="Yang S."/>
            <person name="Yao Q.A."/>
            <person name="Ye J."/>
            <person name="Yeh R.-F."/>
            <person name="Zaveri J.S."/>
            <person name="Zhan M."/>
            <person name="Zhang G."/>
            <person name="Zhao Q."/>
            <person name="Zheng L."/>
            <person name="Zheng X.H."/>
            <person name="Zhong F.N."/>
            <person name="Zhong W."/>
            <person name="Zhou X."/>
            <person name="Zhu S.C."/>
            <person name="Zhu X."/>
            <person name="Smith H.O."/>
            <person name="Gibbs R.A."/>
            <person name="Myers E.W."/>
            <person name="Rubin G.M."/>
            <person name="Venter J.C."/>
        </authorList>
    </citation>
    <scope>NUCLEOTIDE SEQUENCE [LARGE SCALE GENOMIC DNA]</scope>
    <source>
        <strain>Berkeley</strain>
    </source>
</reference>
<reference key="2">
    <citation type="journal article" date="2002" name="Genome Biol.">
        <title>Annotation of the Drosophila melanogaster euchromatic genome: a systematic review.</title>
        <authorList>
            <person name="Misra S."/>
            <person name="Crosby M.A."/>
            <person name="Mungall C.J."/>
            <person name="Matthews B.B."/>
            <person name="Campbell K.S."/>
            <person name="Hradecky P."/>
            <person name="Huang Y."/>
            <person name="Kaminker J.S."/>
            <person name="Millburn G.H."/>
            <person name="Prochnik S.E."/>
            <person name="Smith C.D."/>
            <person name="Tupy J.L."/>
            <person name="Whitfield E.J."/>
            <person name="Bayraktaroglu L."/>
            <person name="Berman B.P."/>
            <person name="Bettencourt B.R."/>
            <person name="Celniker S.E."/>
            <person name="de Grey A.D.N.J."/>
            <person name="Drysdale R.A."/>
            <person name="Harris N.L."/>
            <person name="Richter J."/>
            <person name="Russo S."/>
            <person name="Schroeder A.J."/>
            <person name="Shu S.Q."/>
            <person name="Stapleton M."/>
            <person name="Yamada C."/>
            <person name="Ashburner M."/>
            <person name="Gelbart W.M."/>
            <person name="Rubin G.M."/>
            <person name="Lewis S.E."/>
        </authorList>
    </citation>
    <scope>GENOME REANNOTATION</scope>
    <source>
        <strain>Berkeley</strain>
    </source>
</reference>
<reference key="3">
    <citation type="journal article" date="2002" name="Genome Biol.">
        <title>A Drosophila full-length cDNA resource.</title>
        <authorList>
            <person name="Stapleton M."/>
            <person name="Carlson J.W."/>
            <person name="Brokstein P."/>
            <person name="Yu C."/>
            <person name="Champe M."/>
            <person name="George R.A."/>
            <person name="Guarin H."/>
            <person name="Kronmiller B."/>
            <person name="Pacleb J.M."/>
            <person name="Park S."/>
            <person name="Wan K.H."/>
            <person name="Rubin G.M."/>
            <person name="Celniker S.E."/>
        </authorList>
    </citation>
    <scope>NUCLEOTIDE SEQUENCE [LARGE SCALE MRNA]</scope>
    <source>
        <strain>Berkeley</strain>
        <tissue>Embryo</tissue>
    </source>
</reference>
<sequence length="995" mass="111208">MLDEHILKEMKLSFQLTEQRELASGRRKPEKPQHPPAVPKKKVISKVASNPAKISETMIQKAQMESPKKSKKNKTAGAKRPLSNNVSNPDSSPSQKRLKKDNTLPKKNPVNKSSNVAAKKSAATSKSAKLPIPKVHSINELAPKKTKVKTPNKTKEASLSKKHKVNGNKSSMKVVQNGKVVEIIGTAAETSDIEMNSLDDWSEEDDYLIESDSENDVVEEIDETFLKDPKIFKVKCKGPEYKLSDILPPFEHDEYQPLLLDGDGSGTVRKIKVFKSAQEETDSDEDDIDYEPEDSDDFGSEEFDSEESDSEDTSSADYDSDGDFYSEYSDMEDVSDSDSEEFGSDIFDTDDLDSTYEPPDIEGFFDHPPVGMQREPLIIEEIFDDPPVEKKQERIEQSSVMDIVVKNLSSVPPKKESEVAIETEENDEVSLPEVVTPEKENYLQPSDVPFYRNPQANPTELSVFENSLKSNHVLAVIKEDLEVYGTLVLTLLCGQISVNGYRARRQEAITIYSPKGLNWVSISPTKTKKPVKDEVNWEELNKNFTRAQLDRIKTSFQRQTNAIVLLHRNTSAQQLVDTFGKHMAQNVFPLVNSSNRPFGQSETLLHCLIQSSDQSRTLQVPQVWNKLQMHATSRIIVAGGKGVGKSSLLRYLINRNLGQFPSMLLIDLDIGQPEIFVPQTISCTVIDEPLLGPGFLYNRQPEHAIVVGHTNIVLCAEQYARAVIQLVQNIQNDAKYSNIPWLINTMGYNKGFGIELMALLVDRIRPTDLVQIASPIPINNFDSVLDRNSLSQIKPIIYSAEEFKINEIPKYTLHKLISAVPAREKGTWSLSAKDMRYSNLLARLSSCLTGNAKSLTDCQPLGVSLESLKILHPTSKNYSREELIRGMEANVVYLCHHGAGLPQCLGIGVVRAIDYERKELYLVPAMPLQKMSLVDCLILGGEQSLPQGFLRDQGQGVSSSVPFVFILDDSKSSKSIQQIYHRAPAFLGVPANQRN</sequence>
<proteinExistence type="evidence at transcript level"/>
<feature type="chain" id="PRO_0000403780" description="Polynucleotide 5'-hydroxyl-kinase NOL9">
    <location>
        <begin position="1"/>
        <end position="995"/>
    </location>
</feature>
<feature type="region of interest" description="Disordered" evidence="3">
    <location>
        <begin position="18"/>
        <end position="173"/>
    </location>
</feature>
<feature type="region of interest" description="Disordered" evidence="3">
    <location>
        <begin position="271"/>
        <end position="359"/>
    </location>
</feature>
<feature type="compositionally biased region" description="Low complexity" evidence="3">
    <location>
        <begin position="75"/>
        <end position="94"/>
    </location>
</feature>
<feature type="compositionally biased region" description="Low complexity" evidence="3">
    <location>
        <begin position="110"/>
        <end position="129"/>
    </location>
</feature>
<feature type="compositionally biased region" description="Acidic residues" evidence="3">
    <location>
        <begin position="279"/>
        <end position="354"/>
    </location>
</feature>
<feature type="binding site" evidence="2">
    <location>
        <begin position="639"/>
        <end position="646"/>
    </location>
    <ligand>
        <name>ATP</name>
        <dbReference type="ChEBI" id="CHEBI:30616"/>
    </ligand>
</feature>
<feature type="sequence conflict" description="In Ref. 3; AAL48084." evidence="4" ref="3">
    <original>R</original>
    <variation>G</variation>
    <location>
        <position position="551"/>
    </location>
</feature>
<feature type="sequence conflict" description="In Ref. 3; AAL48084." evidence="4" ref="3">
    <original>N</original>
    <variation>D</variation>
    <location>
        <position position="806"/>
    </location>
</feature>
<keyword id="KW-0067">ATP-binding</keyword>
<keyword id="KW-0418">Kinase</keyword>
<keyword id="KW-0547">Nucleotide-binding</keyword>
<keyword id="KW-0539">Nucleus</keyword>
<keyword id="KW-1185">Reference proteome</keyword>
<keyword id="KW-0698">rRNA processing</keyword>
<keyword id="KW-0808">Transferase</keyword>
<organism>
    <name type="scientific">Drosophila melanogaster</name>
    <name type="common">Fruit fly</name>
    <dbReference type="NCBI Taxonomy" id="7227"/>
    <lineage>
        <taxon>Eukaryota</taxon>
        <taxon>Metazoa</taxon>
        <taxon>Ecdysozoa</taxon>
        <taxon>Arthropoda</taxon>
        <taxon>Hexapoda</taxon>
        <taxon>Insecta</taxon>
        <taxon>Pterygota</taxon>
        <taxon>Neoptera</taxon>
        <taxon>Endopterygota</taxon>
        <taxon>Diptera</taxon>
        <taxon>Brachycera</taxon>
        <taxon>Muscomorpha</taxon>
        <taxon>Ephydroidea</taxon>
        <taxon>Drosophilidae</taxon>
        <taxon>Drosophila</taxon>
        <taxon>Sophophora</taxon>
    </lineage>
</organism>